<gene>
    <name type="primary">ZHX1</name>
</gene>
<proteinExistence type="inferred from homology"/>
<comment type="function">
    <text evidence="1">Acts as a transcriptional repressor. Increases DNMT3B-mediated repressive transcriptional activity when DNMT3B is tethered to DNA. May link molecule between DNMT3B and other co-repressor proteins (By similarity).</text>
</comment>
<comment type="subunit">
    <text evidence="1">Forms homodimers. Heterodimer (via HD1 domain) with ZHX2 (via HD1 domain). Also forms a heterodimer with ZHX3 which is a prerequisite for repressor activity. Interacts with ATF7IP and NFYA. Interacts (via homeobox domains) with DNMT3B (via PWWP domain) (By similarity).</text>
</comment>
<comment type="subcellular location">
    <subcellularLocation>
        <location>Nucleus</location>
    </subcellularLocation>
    <text evidence="1">Colocalized in the nucleus with DNMT3B.</text>
</comment>
<comment type="similarity">
    <text evidence="6">Belongs to the ZHX family.</text>
</comment>
<dbReference type="EMBL" id="DQ977385">
    <property type="protein sequence ID" value="ABM92026.1"/>
    <property type="molecule type" value="Genomic_DNA"/>
</dbReference>
<dbReference type="RefSeq" id="NP_001074953.1">
    <property type="nucleotide sequence ID" value="NM_001081484.1"/>
</dbReference>
<dbReference type="RefSeq" id="XP_009454119.1">
    <property type="nucleotide sequence ID" value="XM_009455844.5"/>
</dbReference>
<dbReference type="RefSeq" id="XP_016814400.1">
    <property type="nucleotide sequence ID" value="XM_016958911.4"/>
</dbReference>
<dbReference type="RefSeq" id="XP_016814401.1">
    <property type="nucleotide sequence ID" value="XM_016958912.1"/>
</dbReference>
<dbReference type="RefSeq" id="XP_016814402.1">
    <property type="nucleotide sequence ID" value="XM_016958913.1"/>
</dbReference>
<dbReference type="RefSeq" id="XP_016814403.1">
    <property type="nucleotide sequence ID" value="XM_016958914.1"/>
</dbReference>
<dbReference type="RefSeq" id="XP_054512376.1">
    <property type="nucleotide sequence ID" value="XM_054656401.2"/>
</dbReference>
<dbReference type="RefSeq" id="XP_063672096.1">
    <property type="nucleotide sequence ID" value="XM_063816026.1"/>
</dbReference>
<dbReference type="SMR" id="A2T771"/>
<dbReference type="FunCoup" id="A2T771">
    <property type="interactions" value="2482"/>
</dbReference>
<dbReference type="STRING" id="9598.ENSPTRP00000035147"/>
<dbReference type="PaxDb" id="9598-ENSPTRP00000035147"/>
<dbReference type="GeneID" id="464368"/>
<dbReference type="KEGG" id="ptr:464368"/>
<dbReference type="CTD" id="11244"/>
<dbReference type="eggNOG" id="ENOG502QT3D">
    <property type="taxonomic scope" value="Eukaryota"/>
</dbReference>
<dbReference type="HOGENOM" id="CLU_009147_1_0_1"/>
<dbReference type="InParanoid" id="A2T771"/>
<dbReference type="OrthoDB" id="13035at9604"/>
<dbReference type="TreeFam" id="TF333363"/>
<dbReference type="Proteomes" id="UP000002277">
    <property type="component" value="Unplaced"/>
</dbReference>
<dbReference type="GO" id="GO:0005634">
    <property type="term" value="C:nucleus"/>
    <property type="evidence" value="ECO:0000250"/>
    <property type="project" value="UniProtKB"/>
</dbReference>
<dbReference type="GO" id="GO:0003677">
    <property type="term" value="F:DNA binding"/>
    <property type="evidence" value="ECO:0007669"/>
    <property type="project" value="UniProtKB-KW"/>
</dbReference>
<dbReference type="GO" id="GO:0000981">
    <property type="term" value="F:DNA-binding transcription factor activity, RNA polymerase II-specific"/>
    <property type="evidence" value="ECO:0000318"/>
    <property type="project" value="GO_Central"/>
</dbReference>
<dbReference type="GO" id="GO:0046982">
    <property type="term" value="F:protein heterodimerization activity"/>
    <property type="evidence" value="ECO:0000250"/>
    <property type="project" value="UniProtKB"/>
</dbReference>
<dbReference type="GO" id="GO:0008270">
    <property type="term" value="F:zinc ion binding"/>
    <property type="evidence" value="ECO:0007669"/>
    <property type="project" value="UniProtKB-KW"/>
</dbReference>
<dbReference type="GO" id="GO:0000122">
    <property type="term" value="P:negative regulation of transcription by RNA polymerase II"/>
    <property type="evidence" value="ECO:0000250"/>
    <property type="project" value="UniProtKB"/>
</dbReference>
<dbReference type="GO" id="GO:0006357">
    <property type="term" value="P:regulation of transcription by RNA polymerase II"/>
    <property type="evidence" value="ECO:0000318"/>
    <property type="project" value="GO_Central"/>
</dbReference>
<dbReference type="CDD" id="cd00086">
    <property type="entry name" value="homeodomain"/>
    <property type="match status" value="5"/>
</dbReference>
<dbReference type="FunFam" id="1.10.10.60:FF:000262">
    <property type="entry name" value="Zinc fingers and homeoboxes 1"/>
    <property type="match status" value="1"/>
</dbReference>
<dbReference type="FunFam" id="1.10.10.60:FF:000235">
    <property type="entry name" value="Zinc fingers and homeoboxes protein 1"/>
    <property type="match status" value="1"/>
</dbReference>
<dbReference type="FunFam" id="1.10.10.60:FF:000240">
    <property type="entry name" value="Zinc fingers and homeoboxes protein 1"/>
    <property type="match status" value="1"/>
</dbReference>
<dbReference type="FunFam" id="3.30.160.60:FF:000296">
    <property type="entry name" value="Zinc fingers and homeoboxes protein 1"/>
    <property type="match status" value="1"/>
</dbReference>
<dbReference type="FunFam" id="1.10.10.60:FF:000237">
    <property type="entry name" value="zinc fingers and homeoboxes protein 1"/>
    <property type="match status" value="1"/>
</dbReference>
<dbReference type="FunFam" id="1.10.10.60:FF:000133">
    <property type="entry name" value="zinc fingers and homeoboxes protein 3"/>
    <property type="match status" value="1"/>
</dbReference>
<dbReference type="Gene3D" id="3.30.160.60">
    <property type="entry name" value="Classic Zinc Finger"/>
    <property type="match status" value="1"/>
</dbReference>
<dbReference type="Gene3D" id="1.10.10.60">
    <property type="entry name" value="Homeodomain-like"/>
    <property type="match status" value="5"/>
</dbReference>
<dbReference type="InterPro" id="IPR001356">
    <property type="entry name" value="HD"/>
</dbReference>
<dbReference type="InterPro" id="IPR009057">
    <property type="entry name" value="Homeodomain-like_sf"/>
</dbReference>
<dbReference type="InterPro" id="IPR024578">
    <property type="entry name" value="Homez_homeobox_dom"/>
</dbReference>
<dbReference type="InterPro" id="IPR041057">
    <property type="entry name" value="ZHX_Znf_C2H2"/>
</dbReference>
<dbReference type="InterPro" id="IPR036236">
    <property type="entry name" value="Znf_C2H2_sf"/>
</dbReference>
<dbReference type="InterPro" id="IPR013087">
    <property type="entry name" value="Znf_C2H2_type"/>
</dbReference>
<dbReference type="PANTHER" id="PTHR15467:SF4">
    <property type="entry name" value="ZINC FINGERS AND HOMEOBOXES PROTEIN 1"/>
    <property type="match status" value="1"/>
</dbReference>
<dbReference type="PANTHER" id="PTHR15467">
    <property type="entry name" value="ZINC-FINGERS AND HOMEOBOXES RELATED"/>
    <property type="match status" value="1"/>
</dbReference>
<dbReference type="Pfam" id="PF00046">
    <property type="entry name" value="Homeodomain"/>
    <property type="match status" value="4"/>
</dbReference>
<dbReference type="Pfam" id="PF11569">
    <property type="entry name" value="Homez"/>
    <property type="match status" value="1"/>
</dbReference>
<dbReference type="Pfam" id="PF18387">
    <property type="entry name" value="zf_C2H2_ZHX"/>
    <property type="match status" value="1"/>
</dbReference>
<dbReference type="SMART" id="SM00389">
    <property type="entry name" value="HOX"/>
    <property type="match status" value="5"/>
</dbReference>
<dbReference type="SMART" id="SM00355">
    <property type="entry name" value="ZnF_C2H2"/>
    <property type="match status" value="2"/>
</dbReference>
<dbReference type="SUPFAM" id="SSF57667">
    <property type="entry name" value="beta-beta-alpha zinc fingers"/>
    <property type="match status" value="2"/>
</dbReference>
<dbReference type="SUPFAM" id="SSF46689">
    <property type="entry name" value="Homeodomain-like"/>
    <property type="match status" value="5"/>
</dbReference>
<dbReference type="PROSITE" id="PS50071">
    <property type="entry name" value="HOMEOBOX_2"/>
    <property type="match status" value="4"/>
</dbReference>
<dbReference type="PROSITE" id="PS50157">
    <property type="entry name" value="ZINC_FINGER_C2H2_2"/>
    <property type="match status" value="1"/>
</dbReference>
<protein>
    <recommendedName>
        <fullName>Zinc fingers and homeoboxes protein 1</fullName>
    </recommendedName>
</protein>
<feature type="chain" id="PRO_0000285462" description="Zinc fingers and homeoboxes protein 1">
    <location>
        <begin position="1"/>
        <end position="873"/>
    </location>
</feature>
<feature type="zinc finger region" description="C2H2-type 1" evidence="3">
    <location>
        <begin position="70"/>
        <end position="93"/>
    </location>
</feature>
<feature type="zinc finger region" description="C2H2-type 2" evidence="3">
    <location>
        <begin position="102"/>
        <end position="125"/>
    </location>
</feature>
<feature type="DNA-binding region" description="Homeobox 1" evidence="4">
    <location>
        <begin position="284"/>
        <end position="346"/>
    </location>
</feature>
<feature type="DNA-binding region" description="Homeobox 2" evidence="4">
    <location>
        <begin position="464"/>
        <end position="526"/>
    </location>
</feature>
<feature type="DNA-binding region" description="Homeobox 3" evidence="4">
    <location>
        <begin position="569"/>
        <end position="630"/>
    </location>
</feature>
<feature type="DNA-binding region" description="Homeobox 4" evidence="4">
    <location>
        <begin position="660"/>
        <end position="722"/>
    </location>
</feature>
<feature type="DNA-binding region" description="Homeobox 5" evidence="4">
    <location>
        <begin position="777"/>
        <end position="832"/>
    </location>
</feature>
<feature type="region of interest" description="Disordered" evidence="5">
    <location>
        <begin position="24"/>
        <end position="63"/>
    </location>
</feature>
<feature type="region of interest" description="Disordered" evidence="5">
    <location>
        <begin position="200"/>
        <end position="236"/>
    </location>
</feature>
<feature type="region of interest" description="Required for interaction with NFYA" evidence="1">
    <location>
        <begin position="272"/>
        <end position="564"/>
    </location>
</feature>
<feature type="region of interest" description="Required for dimerization" evidence="1">
    <location>
        <begin position="272"/>
        <end position="432"/>
    </location>
</feature>
<feature type="region of interest" description="Disordered" evidence="5">
    <location>
        <begin position="626"/>
        <end position="667"/>
    </location>
</feature>
<feature type="region of interest" description="Disordered" evidence="5">
    <location>
        <begin position="732"/>
        <end position="769"/>
    </location>
</feature>
<feature type="region of interest" description="Required for nuclear localization" evidence="1">
    <location>
        <begin position="734"/>
        <end position="768"/>
    </location>
</feature>
<feature type="region of interest" description="Disordered" evidence="5">
    <location>
        <begin position="829"/>
        <end position="873"/>
    </location>
</feature>
<feature type="region of interest" description="Required for repressor activity" evidence="1">
    <location>
        <begin position="831"/>
        <end position="873"/>
    </location>
</feature>
<feature type="compositionally biased region" description="Basic and acidic residues" evidence="5">
    <location>
        <begin position="212"/>
        <end position="221"/>
    </location>
</feature>
<feature type="compositionally biased region" description="Low complexity" evidence="5">
    <location>
        <begin position="223"/>
        <end position="236"/>
    </location>
</feature>
<feature type="compositionally biased region" description="Basic residues" evidence="5">
    <location>
        <begin position="740"/>
        <end position="764"/>
    </location>
</feature>
<feature type="compositionally biased region" description="Acidic residues" evidence="5">
    <location>
        <begin position="831"/>
        <end position="857"/>
    </location>
</feature>
<feature type="compositionally biased region" description="Basic residues" evidence="5">
    <location>
        <begin position="863"/>
        <end position="873"/>
    </location>
</feature>
<feature type="modified residue" description="Phosphothreonine" evidence="2">
    <location>
        <position position="36"/>
    </location>
</feature>
<feature type="modified residue" description="Phosphoserine" evidence="2">
    <location>
        <position position="45"/>
    </location>
</feature>
<feature type="modified residue" description="Phosphoserine" evidence="2">
    <location>
        <position position="47"/>
    </location>
</feature>
<feature type="modified residue" description="Phosphoserine" evidence="2">
    <location>
        <position position="48"/>
    </location>
</feature>
<feature type="modified residue" description="Phosphoserine" evidence="2">
    <location>
        <position position="202"/>
    </location>
</feature>
<feature type="modified residue" description="Phosphoserine" evidence="2">
    <location>
        <position position="648"/>
    </location>
</feature>
<feature type="modified residue" description="Phosphoserine" evidence="2">
    <location>
        <position position="774"/>
    </location>
</feature>
<feature type="cross-link" description="Glycyl lysine isopeptide (Lys-Gly) (interchain with G-Cter in SUMO2)" evidence="2">
    <location>
        <position position="159"/>
    </location>
</feature>
<feature type="cross-link" description="Glycyl lysine isopeptide (Lys-Gly) (interchain with G-Cter in SUMO2)" evidence="2">
    <location>
        <position position="441"/>
    </location>
</feature>
<feature type="cross-link" description="Glycyl lysine isopeptide (Lys-Gly) (interchain with G-Cter in SUMO2)" evidence="2">
    <location>
        <position position="454"/>
    </location>
</feature>
<feature type="cross-link" description="Glycyl lysine isopeptide (Lys-Gly) (interchain with G-Cter in SUMO2)" evidence="2">
    <location>
        <position position="485"/>
    </location>
</feature>
<feature type="cross-link" description="Glycyl lysine isopeptide (Lys-Gly) (interchain with G-Cter in SUMO2)" evidence="2">
    <location>
        <position position="629"/>
    </location>
</feature>
<name>ZHX1_PANTR</name>
<organism>
    <name type="scientific">Pan troglodytes</name>
    <name type="common">Chimpanzee</name>
    <dbReference type="NCBI Taxonomy" id="9598"/>
    <lineage>
        <taxon>Eukaryota</taxon>
        <taxon>Metazoa</taxon>
        <taxon>Chordata</taxon>
        <taxon>Craniata</taxon>
        <taxon>Vertebrata</taxon>
        <taxon>Euteleostomi</taxon>
        <taxon>Mammalia</taxon>
        <taxon>Eutheria</taxon>
        <taxon>Euarchontoglires</taxon>
        <taxon>Primates</taxon>
        <taxon>Haplorrhini</taxon>
        <taxon>Catarrhini</taxon>
        <taxon>Hominidae</taxon>
        <taxon>Pan</taxon>
    </lineage>
</organism>
<evidence type="ECO:0000250" key="1"/>
<evidence type="ECO:0000250" key="2">
    <source>
        <dbReference type="UniProtKB" id="Q9UKY1"/>
    </source>
</evidence>
<evidence type="ECO:0000255" key="3">
    <source>
        <dbReference type="PROSITE-ProRule" id="PRU00042"/>
    </source>
</evidence>
<evidence type="ECO:0000255" key="4">
    <source>
        <dbReference type="PROSITE-ProRule" id="PRU00108"/>
    </source>
</evidence>
<evidence type="ECO:0000256" key="5">
    <source>
        <dbReference type="SAM" id="MobiDB-lite"/>
    </source>
</evidence>
<evidence type="ECO:0000305" key="6"/>
<reference key="1">
    <citation type="submission" date="2006-08" db="EMBL/GenBank/DDBJ databases">
        <title>Positive selection in transcription factor genes on the human lineage.</title>
        <authorList>
            <person name="Nickel G.C."/>
            <person name="Tefft D.L."/>
            <person name="Trevarthen K."/>
            <person name="Funt J."/>
            <person name="Adams M.D."/>
        </authorList>
    </citation>
    <scope>NUCLEOTIDE SEQUENCE [GENOMIC DNA]</scope>
</reference>
<keyword id="KW-0238">DNA-binding</keyword>
<keyword id="KW-0371">Homeobox</keyword>
<keyword id="KW-1017">Isopeptide bond</keyword>
<keyword id="KW-0479">Metal-binding</keyword>
<keyword id="KW-0539">Nucleus</keyword>
<keyword id="KW-0597">Phosphoprotein</keyword>
<keyword id="KW-1185">Reference proteome</keyword>
<keyword id="KW-0677">Repeat</keyword>
<keyword id="KW-0678">Repressor</keyword>
<keyword id="KW-0804">Transcription</keyword>
<keyword id="KW-0805">Transcription regulation</keyword>
<keyword id="KW-0832">Ubl conjugation</keyword>
<keyword id="KW-0862">Zinc</keyword>
<keyword id="KW-0863">Zinc-finger</keyword>
<accession>A2T771</accession>
<sequence>MASRRKSTTPCMVLASEQDPDLELISDLDEGPPVLTPVENTRAESISSDEEVHESVDSDNQQNKKVEGGYECKYCTFQTPDLNMFTFHVDSEHPNVVLNSSYVCVECNFLTKRYDALSEHNLKYHPGEENFKLTMVKRNNQTIFEQTINDLTFDGSFIKEENAEQAESTEVSSSGISISKTPIMKMMKNKVENKRIAVHHNSVEDVPEEKENEIKPDREEIVENPSSSASESNTSTSIVNRIHPSTASTVVTPAAVLPGLAQVITAVSAQQNSNLIPKVLIPVNSIPTYNAALDNNPLLLNTYNKFPYPTMSEITVLSAQAKYTEEQIKIWFSAQRLKHGVSWTPEEVEEARRKQFNGTVHTVPQTITVIPTHISTGSNGLPSILQTCQIVGQPGLVLTQVAGTNTLPVTAPIALTVAGVPSQNNIQKSQVPAAQPTAETKPATAAVPTSQSVKHETALVNPDSFGIRAKKTKEQLAELKVSYLKNQFPHDSEIIRLMKITGLTKGEIKKWFSDTRYNQRNSKSNQCLHLNNDSSTTIIIDSSDETTESPTVGTAQPKQSWNPFPDFTPQKFKEKTAEQLRVLQASFLNSSVLTDEELNRLRAQTKLTRREIDAWFTEKKKSKALKEEKMEIDESNAGSSKEEAGETSPGDESGAPKSGSTGKICKKTPEQLHMLKSAFVRTQWPSPEEYDKLAKESGLARTDIVSWFGDTRYAWKNGNLKWYYYYQSANSSSMNGLSSLRKRGRGRPKGRGRGRPRGRPRGSKRINNWDRGPSLIKFKTGTAILKDYYLKHKFLNEQDLDELVNKSHMGYEQVREWFAERQRRSELGIELFEENEEEDEVIDDQEEDEEETDDSDTWEPPRHVKRKLSKSDD</sequence>